<sequence length="301" mass="31934">MEPLMGMGVLALMGAAATIAGTTEDLESDVGSQSNPNSQVQLAPQMMYPHRIYNKAISGEPPSNALICAIGGTVASVLMTANLSVIFAIAIGALVASAVHGTYCITAYMGRTASQKRFRQPIYLDILRSHTPVMMGYAFITTFCILVVSYIMVAVLAHPFPLTLLAFIWGITVGAIGSSTGDVHYGAEREFQNVEFGSGLNAANSGNIVRKAESGLRNGIDNSWFCAKFGGPVTGLAFGMTVFLSGWVTAVFNPAISLTMGWLSVAAGVILVLLLIIWNRKIEVAARKAFGPYKEEEEVAA</sequence>
<evidence type="ECO:0000255" key="1">
    <source>
        <dbReference type="HAMAP-Rule" id="MF_01098"/>
    </source>
</evidence>
<reference key="1">
    <citation type="journal article" date="2009" name="ISME J.">
        <title>The genome sequence of the psychrophilic archaeon, Methanococcoides burtonii: the role of genome evolution in cold adaptation.</title>
        <authorList>
            <person name="Allen M.A."/>
            <person name="Lauro F.M."/>
            <person name="Williams T.J."/>
            <person name="Burg D."/>
            <person name="Siddiqui K.S."/>
            <person name="De Francisci D."/>
            <person name="Chong K.W."/>
            <person name="Pilak O."/>
            <person name="Chew H.H."/>
            <person name="De Maere M.Z."/>
            <person name="Ting L."/>
            <person name="Katrib M."/>
            <person name="Ng C."/>
            <person name="Sowers K.R."/>
            <person name="Galperin M.Y."/>
            <person name="Anderson I.J."/>
            <person name="Ivanova N."/>
            <person name="Dalin E."/>
            <person name="Martinez M."/>
            <person name="Lapidus A."/>
            <person name="Hauser L."/>
            <person name="Land M."/>
            <person name="Thomas T."/>
            <person name="Cavicchioli R."/>
        </authorList>
    </citation>
    <scope>NUCLEOTIDE SEQUENCE [LARGE SCALE GENOMIC DNA]</scope>
    <source>
        <strain>DSM 6242 / NBRC 107633 / OCM 468 / ACE-M</strain>
    </source>
</reference>
<comment type="function">
    <text evidence="1">Part of a complex that catalyzes the formation of methyl-coenzyme M and tetrahydromethanopterin from coenzyme M and methyl-tetrahydromethanopterin. This is an energy-conserving, sodium-ion translocating step.</text>
</comment>
<comment type="catalytic activity">
    <reaction evidence="1">
        <text>5-methyl-5,6,7,8-tetrahydromethanopterin + coenzyme M + 2 Na(+)(in) = 5,6,7,8-tetrahydromethanopterin + methyl-coenzyme M + 2 Na(+)(out)</text>
        <dbReference type="Rhea" id="RHEA:53492"/>
        <dbReference type="ChEBI" id="CHEBI:29101"/>
        <dbReference type="ChEBI" id="CHEBI:58103"/>
        <dbReference type="ChEBI" id="CHEBI:58116"/>
        <dbReference type="ChEBI" id="CHEBI:58286"/>
        <dbReference type="ChEBI" id="CHEBI:58319"/>
        <dbReference type="EC" id="7.2.1.4"/>
    </reaction>
</comment>
<comment type="subunit">
    <text evidence="1">The complex is composed of 8 subunits; MtrA, MtrB, MtrC, MtrD, MtrE, MtrF, MtrG and MtrH.</text>
</comment>
<comment type="subcellular location">
    <subcellularLocation>
        <location evidence="1">Cell membrane</location>
        <topology evidence="1">Multi-pass membrane protein</topology>
    </subcellularLocation>
</comment>
<comment type="similarity">
    <text evidence="1">Belongs to the MtrE family.</text>
</comment>
<organism>
    <name type="scientific">Methanococcoides burtonii (strain DSM 6242 / NBRC 107633 / OCM 468 / ACE-M)</name>
    <dbReference type="NCBI Taxonomy" id="259564"/>
    <lineage>
        <taxon>Archaea</taxon>
        <taxon>Methanobacteriati</taxon>
        <taxon>Methanobacteriota</taxon>
        <taxon>Stenosarchaea group</taxon>
        <taxon>Methanomicrobia</taxon>
        <taxon>Methanosarcinales</taxon>
        <taxon>Methanosarcinaceae</taxon>
        <taxon>Methanococcoides</taxon>
    </lineage>
</organism>
<proteinExistence type="inferred from homology"/>
<dbReference type="EC" id="7.2.1.4" evidence="1"/>
<dbReference type="EMBL" id="CP000300">
    <property type="protein sequence ID" value="ABE52432.1"/>
    <property type="molecule type" value="Genomic_DNA"/>
</dbReference>
<dbReference type="RefSeq" id="WP_011499576.1">
    <property type="nucleotide sequence ID" value="NC_007955.1"/>
</dbReference>
<dbReference type="SMR" id="Q12VU4"/>
<dbReference type="STRING" id="259564.Mbur_1525"/>
<dbReference type="GeneID" id="3997348"/>
<dbReference type="KEGG" id="mbu:Mbur_1525"/>
<dbReference type="HOGENOM" id="CLU_958513_0_0_2"/>
<dbReference type="OrthoDB" id="82302at2157"/>
<dbReference type="Proteomes" id="UP000001979">
    <property type="component" value="Chromosome"/>
</dbReference>
<dbReference type="GO" id="GO:0005737">
    <property type="term" value="C:cytoplasm"/>
    <property type="evidence" value="ECO:0007669"/>
    <property type="project" value="InterPro"/>
</dbReference>
<dbReference type="GO" id="GO:0005886">
    <property type="term" value="C:plasma membrane"/>
    <property type="evidence" value="ECO:0007669"/>
    <property type="project" value="UniProtKB-SubCell"/>
</dbReference>
<dbReference type="GO" id="GO:0012506">
    <property type="term" value="C:vesicle membrane"/>
    <property type="evidence" value="ECO:0007669"/>
    <property type="project" value="InterPro"/>
</dbReference>
<dbReference type="GO" id="GO:0030269">
    <property type="term" value="F:tetrahydromethanopterin S-methyltransferase activity"/>
    <property type="evidence" value="ECO:0007669"/>
    <property type="project" value="UniProtKB-UniRule"/>
</dbReference>
<dbReference type="GO" id="GO:0019386">
    <property type="term" value="P:methanogenesis, from carbon dioxide"/>
    <property type="evidence" value="ECO:0007669"/>
    <property type="project" value="UniProtKB-UniRule"/>
</dbReference>
<dbReference type="GO" id="GO:0032259">
    <property type="term" value="P:methylation"/>
    <property type="evidence" value="ECO:0007669"/>
    <property type="project" value="UniProtKB-KW"/>
</dbReference>
<dbReference type="GO" id="GO:0006730">
    <property type="term" value="P:one-carbon metabolic process"/>
    <property type="evidence" value="ECO:0007669"/>
    <property type="project" value="UniProtKB-UniRule"/>
</dbReference>
<dbReference type="HAMAP" id="MF_01098">
    <property type="entry name" value="MtrE"/>
    <property type="match status" value="1"/>
</dbReference>
<dbReference type="InterPro" id="IPR005780">
    <property type="entry name" value="MeTrfase_E"/>
</dbReference>
<dbReference type="NCBIfam" id="TIGR01113">
    <property type="entry name" value="mtrE"/>
    <property type="match status" value="1"/>
</dbReference>
<dbReference type="Pfam" id="PF04206">
    <property type="entry name" value="MtrE"/>
    <property type="match status" value="1"/>
</dbReference>
<dbReference type="PIRSF" id="PIRSF016509">
    <property type="entry name" value="MtrE"/>
    <property type="match status" value="1"/>
</dbReference>
<feature type="chain" id="PRO_1000064943" description="Tetrahydromethanopterin S-methyltransferase subunit E">
    <location>
        <begin position="1"/>
        <end position="301"/>
    </location>
</feature>
<feature type="transmembrane region" description="Helical" evidence="1">
    <location>
        <begin position="85"/>
        <end position="105"/>
    </location>
</feature>
<feature type="transmembrane region" description="Helical" evidence="1">
    <location>
        <begin position="130"/>
        <end position="150"/>
    </location>
</feature>
<feature type="transmembrane region" description="Helical" evidence="1">
    <location>
        <begin position="151"/>
        <end position="171"/>
    </location>
</feature>
<feature type="transmembrane region" description="Helical" evidence="1">
    <location>
        <begin position="232"/>
        <end position="252"/>
    </location>
</feature>
<feature type="transmembrane region" description="Helical" evidence="1">
    <location>
        <begin position="258"/>
        <end position="278"/>
    </location>
</feature>
<gene>
    <name evidence="1" type="primary">mtrE</name>
    <name type="ordered locus">Mbur_1525</name>
</gene>
<keyword id="KW-1003">Cell membrane</keyword>
<keyword id="KW-0472">Membrane</keyword>
<keyword id="KW-0489">Methyltransferase</keyword>
<keyword id="KW-0554">One-carbon metabolism</keyword>
<keyword id="KW-0808">Transferase</keyword>
<keyword id="KW-1278">Translocase</keyword>
<keyword id="KW-0812">Transmembrane</keyword>
<keyword id="KW-1133">Transmembrane helix</keyword>
<protein>
    <recommendedName>
        <fullName evidence="1">Tetrahydromethanopterin S-methyltransferase subunit E</fullName>
        <ecNumber evidence="1">7.2.1.4</ecNumber>
    </recommendedName>
    <alternativeName>
        <fullName evidence="1">N5-methyltetrahydromethanopterin--coenzyme M methyltransferase subunit E</fullName>
    </alternativeName>
</protein>
<name>MTRE_METBU</name>
<accession>Q12VU4</accession>